<name>CTNH1_CAEEL</name>
<gene>
    <name evidence="14" type="primary">sys-1</name>
    <name evidence="14" type="ORF">T23D8.9</name>
</gene>
<organism evidence="13">
    <name type="scientific">Caenorhabditis elegans</name>
    <dbReference type="NCBI Taxonomy" id="6239"/>
    <lineage>
        <taxon>Eukaryota</taxon>
        <taxon>Metazoa</taxon>
        <taxon>Ecdysozoa</taxon>
        <taxon>Nematoda</taxon>
        <taxon>Chromadorea</taxon>
        <taxon>Rhabditida</taxon>
        <taxon>Rhabditina</taxon>
        <taxon>Rhabditomorpha</taxon>
        <taxon>Rhabditoidea</taxon>
        <taxon>Rhabditidae</taxon>
        <taxon>Peloderinae</taxon>
        <taxon>Caenorhabditis</taxon>
    </lineage>
</organism>
<proteinExistence type="evidence at protein level"/>
<reference evidence="13" key="1">
    <citation type="journal article" date="1998" name="Science">
        <title>Genome sequence of the nematode C. elegans: a platform for investigating biology.</title>
        <authorList>
            <consortium name="The C. elegans sequencing consortium"/>
        </authorList>
    </citation>
    <scope>NUCLEOTIDE SEQUENCE [LARGE SCALE GENOMIC DNA]</scope>
    <source>
        <strain evidence="13">Bristol N2</strain>
    </source>
</reference>
<reference evidence="12" key="2">
    <citation type="journal article" date="2001" name="Dev. Biol.">
        <title>The sys-1 gene and sexual dimorphism during gonadogenesis in Caenorhabditis elegans.</title>
        <authorList>
            <person name="Miskowski J."/>
            <person name="Li Y."/>
            <person name="Kimble J."/>
        </authorList>
    </citation>
    <scope>FUNCTION</scope>
</reference>
<reference evidence="12" key="3">
    <citation type="journal article" date="2004" name="Genetics">
        <title>The sys-1 and sys-3 genes cooperate with Wnt signaling to establish the proximal-distal axis of the Caenorhabditis elegans gonad.</title>
        <authorList>
            <person name="Siegfried K.R."/>
            <person name="Kidd A.R. III"/>
            <person name="Chesney M.A."/>
            <person name="Kimble J."/>
        </authorList>
    </citation>
    <scope>FUNCTION</scope>
</reference>
<reference evidence="12" key="4">
    <citation type="journal article" date="2007" name="Development">
        <title>Binary cell fate specification during C. elegans embryogenesis driven by reiterated reciprocal asymmetry of TCF POP-1 and its coactivator beta-catenin SYS-1.</title>
        <authorList>
            <person name="Huang S."/>
            <person name="Shetty P."/>
            <person name="Robertson S.M."/>
            <person name="Lin R."/>
        </authorList>
    </citation>
    <scope>FUNCTION</scope>
    <scope>SUBCELLULAR LOCATION</scope>
    <scope>DEVELOPMENTAL STAGE</scope>
    <scope>DISRUPTION PHENOTYPE</scope>
</reference>
<reference evidence="12" key="5">
    <citation type="journal article" date="2007" name="Proc. Natl. Acad. Sci. U.S.A.">
        <title>Reciprocal asymmetry of SYS-1/beta-catenin and POP-1/TCF controls asymmetric divisions in Caenorhabditis elegans.</title>
        <authorList>
            <person name="Phillips B.T."/>
            <person name="Kidd A.R. III"/>
            <person name="King R."/>
            <person name="Hardin J."/>
            <person name="Kimble J."/>
        </authorList>
    </citation>
    <scope>FUNCTION</scope>
    <scope>SUBCELLULAR LOCATION</scope>
    <scope>DEVELOPMENTAL STAGE</scope>
    <scope>DISRUPTION PHENOTYPE</scope>
</reference>
<reference evidence="12" key="6">
    <citation type="journal article" date="2009" name="Dev. Cell">
        <title>Linking asymmetric cell division to the terminal differentiation program of postmitotic neurons in C. elegans.</title>
        <authorList>
            <person name="Bertrand V."/>
            <person name="Hobert O."/>
        </authorList>
    </citation>
    <scope>FUNCTION</scope>
    <scope>SUBCELLULAR LOCATION</scope>
    <scope>DEVELOPMENTAL STAGE</scope>
</reference>
<reference evidence="12" key="7">
    <citation type="journal article" date="2015" name="Dev. Cell">
        <title>Atypical Transcriptional Activation by TCF via a Zic Transcription Factor in C. elegans Neuronal Precursors.</title>
        <authorList>
            <person name="Murgan S."/>
            <person name="Kari W."/>
            <person name="Rothbaecher U."/>
            <person name="Iche-Torres M."/>
            <person name="Melenec P."/>
            <person name="Hobert O."/>
            <person name="Bertrand V."/>
        </authorList>
    </citation>
    <scope>FUNCTION</scope>
    <scope>INTERACTION WITH POP-1</scope>
    <scope>SUBCELLULAR LOCATION</scope>
    <scope>DEVELOPMENTAL STAGE</scope>
    <scope>DISRUPTION PHENOTYPE</scope>
</reference>
<reference evidence="12" key="8">
    <citation type="journal article" date="2022" name="Dev. Biol.">
        <title>pop-1/TCF, ref-2/ZIC and T-box factors regulate the development of anterior cells in the C. elegans embryo.</title>
        <authorList>
            <person name="Rumley J.D."/>
            <person name="Preston E.A."/>
            <person name="Cook D."/>
            <person name="Peng F.L."/>
            <person name="Zacharias A.L."/>
            <person name="Wu L."/>
            <person name="Jileaeva I."/>
            <person name="Murray J.I."/>
        </authorList>
    </citation>
    <scope>FUNCTION</scope>
    <scope>DISRUPTION PHENOTYPE</scope>
</reference>
<reference evidence="12" key="9">
    <citation type="journal article" date="2022" name="Mol. Biol. Cell">
        <title>Centrosomal enrichment and proteasomal degradation of SYS-1/beta-catenin requires the microtubule motor dynein.</title>
        <authorList>
            <person name="Thompson J.W."/>
            <person name="Michel M.F.V."/>
            <person name="Phillips B.T."/>
        </authorList>
    </citation>
    <scope>FUNCTION</scope>
    <scope>SUBCELLULAR LOCATION</scope>
</reference>
<reference evidence="17 18" key="10">
    <citation type="journal article" date="2008" name="Dev. Cell">
        <title>The C. elegans SYS-1 protein is a bona fide beta-catenin.</title>
        <authorList>
            <person name="Liu J."/>
            <person name="Phillips B.T."/>
            <person name="Amaya M.F."/>
            <person name="Kimble J."/>
            <person name="Xu W."/>
        </authorList>
    </citation>
    <scope>X-RAY CRYSTALLOGRAPHY (2.50 ANGSTROMS) OF 180-798</scope>
    <scope>INTERACTION WITH POP-1</scope>
    <scope>MUTAGENESIS OF ALA-533 AND LYS-539</scope>
</reference>
<feature type="chain" id="PRO_0000460278" description="Beta-catenin homolog sys-1">
    <location>
        <begin position="1"/>
        <end position="811"/>
    </location>
</feature>
<feature type="region of interest" description="Disordered" evidence="1">
    <location>
        <begin position="1"/>
        <end position="105"/>
    </location>
</feature>
<feature type="compositionally biased region" description="Low complexity" evidence="1">
    <location>
        <begin position="64"/>
        <end position="103"/>
    </location>
</feature>
<feature type="splice variant" id="VSP_062289" description="In isoform c." evidence="12">
    <location>
        <begin position="1"/>
        <end position="133"/>
    </location>
</feature>
<feature type="splice variant" id="VSP_062290" description="In isoform b." evidence="12">
    <original>LWFNTPDPMQRLHMAKTIRTWIRQDKFAQVDQANMPNCVQQILNIIYD</original>
    <variation>FNFSYGLIHQIPCKDFIWQKQYELGYDKINLHKLIRQICRTAYNKSLT</variation>
    <location>
        <begin position="192"/>
        <end position="239"/>
    </location>
</feature>
<feature type="splice variant" id="VSP_062291" description="In isoform b." evidence="12">
    <location>
        <begin position="240"/>
        <end position="811"/>
    </location>
</feature>
<feature type="mutagenesis site" description="Abolishes interactions with pop-1." evidence="6">
    <original>A</original>
    <variation>L</variation>
    <location>
        <position position="533"/>
    </location>
</feature>
<feature type="mutagenesis site" description="Abolishes interactions with pop-1." evidence="6">
    <original>K</original>
    <variation>A</variation>
    <location>
        <position position="539"/>
    </location>
</feature>
<feature type="helix" evidence="19">
    <location>
        <begin position="182"/>
        <end position="192"/>
    </location>
</feature>
<feature type="helix" evidence="19">
    <location>
        <begin position="193"/>
        <end position="195"/>
    </location>
</feature>
<feature type="helix" evidence="19">
    <location>
        <begin position="199"/>
        <end position="216"/>
    </location>
</feature>
<feature type="turn" evidence="19">
    <location>
        <begin position="217"/>
        <end position="220"/>
    </location>
</feature>
<feature type="helix" evidence="19">
    <location>
        <begin position="223"/>
        <end position="225"/>
    </location>
</feature>
<feature type="helix" evidence="19">
    <location>
        <begin position="226"/>
        <end position="241"/>
    </location>
</feature>
<feature type="helix" evidence="19">
    <location>
        <begin position="250"/>
        <end position="269"/>
    </location>
</feature>
<feature type="helix" evidence="19">
    <location>
        <begin position="271"/>
        <end position="276"/>
    </location>
</feature>
<feature type="helix" evidence="19">
    <location>
        <begin position="277"/>
        <end position="282"/>
    </location>
</feature>
<feature type="strand" evidence="19">
    <location>
        <begin position="287"/>
        <end position="290"/>
    </location>
</feature>
<feature type="helix" evidence="19">
    <location>
        <begin position="294"/>
        <end position="301"/>
    </location>
</feature>
<feature type="helix" evidence="19">
    <location>
        <begin position="304"/>
        <end position="308"/>
    </location>
</feature>
<feature type="turn" evidence="19">
    <location>
        <begin position="310"/>
        <end position="312"/>
    </location>
</feature>
<feature type="helix" evidence="19">
    <location>
        <begin position="313"/>
        <end position="329"/>
    </location>
</feature>
<feature type="helix" evidence="19">
    <location>
        <begin position="333"/>
        <end position="343"/>
    </location>
</feature>
<feature type="helix" evidence="19">
    <location>
        <begin position="346"/>
        <end position="353"/>
    </location>
</feature>
<feature type="helix" evidence="19">
    <location>
        <begin position="354"/>
        <end position="356"/>
    </location>
</feature>
<feature type="helix" evidence="19">
    <location>
        <begin position="362"/>
        <end position="364"/>
    </location>
</feature>
<feature type="helix" evidence="19">
    <location>
        <begin position="368"/>
        <end position="377"/>
    </location>
</feature>
<feature type="helix" evidence="19">
    <location>
        <begin position="381"/>
        <end position="389"/>
    </location>
</feature>
<feature type="helix" evidence="19">
    <location>
        <begin position="403"/>
        <end position="418"/>
    </location>
</feature>
<feature type="strand" evidence="20">
    <location>
        <begin position="419"/>
        <end position="421"/>
    </location>
</feature>
<feature type="helix" evidence="19">
    <location>
        <begin position="423"/>
        <end position="428"/>
    </location>
</feature>
<feature type="helix" evidence="19">
    <location>
        <begin position="430"/>
        <end position="449"/>
    </location>
</feature>
<feature type="helix" evidence="19">
    <location>
        <begin position="453"/>
        <end position="461"/>
    </location>
</feature>
<feature type="helix" evidence="19">
    <location>
        <begin position="464"/>
        <end position="471"/>
    </location>
</feature>
<feature type="helix" evidence="19">
    <location>
        <begin position="477"/>
        <end position="490"/>
    </location>
</feature>
<feature type="helix" evidence="19">
    <location>
        <begin position="494"/>
        <end position="497"/>
    </location>
</feature>
<feature type="helix" evidence="19">
    <location>
        <begin position="504"/>
        <end position="514"/>
    </location>
</feature>
<feature type="helix" evidence="19">
    <location>
        <begin position="518"/>
        <end position="531"/>
    </location>
</feature>
<feature type="helix" evidence="19">
    <location>
        <begin position="536"/>
        <end position="544"/>
    </location>
</feature>
<feature type="helix" evidence="19">
    <location>
        <begin position="547"/>
        <end position="556"/>
    </location>
</feature>
<feature type="helix" evidence="19">
    <location>
        <begin position="561"/>
        <end position="563"/>
    </location>
</feature>
<feature type="helix" evidence="19">
    <location>
        <begin position="567"/>
        <end position="588"/>
    </location>
</feature>
<feature type="helix" evidence="19">
    <location>
        <begin position="589"/>
        <end position="591"/>
    </location>
</feature>
<feature type="helix" evidence="19">
    <location>
        <begin position="604"/>
        <end position="611"/>
    </location>
</feature>
<feature type="helix" evidence="19">
    <location>
        <begin position="612"/>
        <end position="614"/>
    </location>
</feature>
<feature type="helix" evidence="19">
    <location>
        <begin position="616"/>
        <end position="627"/>
    </location>
</feature>
<feature type="helix" evidence="19">
    <location>
        <begin position="636"/>
        <end position="651"/>
    </location>
</feature>
<feature type="helix" evidence="19">
    <location>
        <begin position="661"/>
        <end position="663"/>
    </location>
</feature>
<feature type="turn" evidence="19">
    <location>
        <begin position="667"/>
        <end position="669"/>
    </location>
</feature>
<feature type="helix" evidence="19">
    <location>
        <begin position="673"/>
        <end position="686"/>
    </location>
</feature>
<feature type="turn" evidence="19">
    <location>
        <begin position="691"/>
        <end position="693"/>
    </location>
</feature>
<feature type="helix" evidence="19">
    <location>
        <begin position="694"/>
        <end position="714"/>
    </location>
</feature>
<feature type="helix" evidence="19">
    <location>
        <begin position="718"/>
        <end position="723"/>
    </location>
</feature>
<feature type="turn" evidence="19">
    <location>
        <begin position="724"/>
        <end position="727"/>
    </location>
</feature>
<feature type="helix" evidence="19">
    <location>
        <begin position="731"/>
        <end position="735"/>
    </location>
</feature>
<feature type="strand" evidence="20">
    <location>
        <begin position="736"/>
        <end position="738"/>
    </location>
</feature>
<feature type="helix" evidence="19">
    <location>
        <begin position="742"/>
        <end position="758"/>
    </location>
</feature>
<feature type="helix" evidence="19">
    <location>
        <begin position="762"/>
        <end position="765"/>
    </location>
</feature>
<feature type="helix" evidence="19">
    <location>
        <begin position="770"/>
        <end position="777"/>
    </location>
</feature>
<feature type="helix" evidence="19">
    <location>
        <begin position="782"/>
        <end position="792"/>
    </location>
</feature>
<protein>
    <recommendedName>
        <fullName evidence="11">Beta-catenin homolog sys-1</fullName>
    </recommendedName>
    <alternativeName>
        <fullName evidence="14">Symmetrical sister cell hermaphrodite gonad defect protein sys-1</fullName>
    </alternativeName>
</protein>
<comment type="function">
    <text evidence="2 3 4 5 7 8 9 10">Transcription coregulator (PubMed:26073017). Part of the Wnt signaling asymmetry pathway, probably acting downstream of putative frizzled ligand mom-2, Wnt/frizzled receptors lin-17 and mom-5, and dishevelled homolog dsh-2 (PubMed:15020416, PubMed:17296929, PubMed:17567664, PubMed:19386265, PubMed:26073017). Activates or represses target gene expression, depending on upstream Wnt signals and interactions with transcription factors, such as pop-1 (PubMed:26073017, PubMed:35660370). Required for the activation of Wnt-responsive genes in the E blastomere; thereby leading to a role in endoderm specification and gut development (PubMed:17296929, PubMed:17567664). Reciprocal distribution patterns of sys-1 and pop-1/TCF in the daughters of anterior-posterior cell divisions functions in specifying cell fate; a higher sys-1 to pop-1 ratio promotes the posterior cell fate, whereas a low sys-1 to pop-1 ratio promotes the anterior fate (PubMed:17296929, PubMed:17567664). Represses expression of homeobox ttx-3 in neuroblasts of the SIAD/SIBV lineage, perhaps acting by blocking its transcriptional activation by a complex consisting of ref-2 and pop-1 (PubMed:26073017). Required for early organization of the hermaphrodite, but not the male, gonad; involved in generation of regulatory cells, known as the distal tip cells (DTC), and in formation of the somatic gonadal primordium (PubMed:11161562, PubMed:15020416, PubMed:17296929, PubMed:35196020). Involved in regulating asymmetric divisions of the somatic gonadal precursor cells (SGP), Z1 and Z4 (PubMed:15020416).</text>
</comment>
<comment type="subunit">
    <text evidence="6 8">Interacts with TCF transcription factor pop-1 (via N-terminal region); interaction is direct.</text>
</comment>
<comment type="interaction">
    <interactant intactId="EBI-3871339">
        <id>Q9XVI2</id>
    </interactant>
    <interactant intactId="EBI-3871243">
        <id>Q19345</id>
        <label>nhr-25</label>
    </interactant>
    <organismsDiffer>false</organismsDiffer>
    <experiments>2</experiments>
</comment>
<comment type="interaction">
    <interactant intactId="EBI-3871339">
        <id>Q9XVI2</id>
    </interactant>
    <interactant intactId="EBI-317870">
        <id>Q10666</id>
        <label>pop-1</label>
    </interactant>
    <organismsDiffer>false</organismsDiffer>
    <experiments>6</experiments>
</comment>
<comment type="subcellular location">
    <subcellularLocation>
        <location evidence="4 5 7 8">Nucleus</location>
    </subcellularLocation>
    <subcellularLocation>
        <location evidence="4 5">Cytoplasm</location>
    </subcellularLocation>
    <subcellularLocation>
        <location evidence="4">Cytoplasmic granule</location>
    </subcellularLocation>
    <subcellularLocation>
        <location evidence="4 5">Cytoplasm</location>
        <location evidence="4 5">Cytoskeleton</location>
        <location evidence="4 5">Microtubule organizing center</location>
        <location evidence="4 5">Centrosome</location>
    </subcellularLocation>
    <subcellularLocation>
        <location evidence="9">Chromosome</location>
        <location evidence="9">Centromere</location>
        <location evidence="9">Kinetochore</location>
    </subcellularLocation>
    <text evidence="5 9">Centrosomal localization increases at metaphase (PubMed:17567664). Maintenance of centrosomal localization requires trafficking of sys-1 by microtubule motor dynein and may enhance proteasomal degradation of sys-1 (PubMed:35196020). Localized to nucleus in a Wnt signal- and pop-1-dependent manner (PubMed:17567664).</text>
</comment>
<comment type="alternative products">
    <event type="alternative splicing"/>
    <isoform>
        <id>Q9XVI2-1</id>
        <name evidence="14">a</name>
        <sequence type="displayed"/>
    </isoform>
    <isoform>
        <id>Q9XVI2-2</id>
        <name evidence="15">b</name>
        <sequence type="described" ref="VSP_062290 VSP_062291"/>
    </isoform>
    <isoform>
        <id>Q9XVI2-3</id>
        <name evidence="16">c</name>
        <sequence type="described" ref="VSP_062289"/>
    </isoform>
</comment>
<comment type="developmental stage">
    <text evidence="4 5 7 8">Expressed in many cells during embryogenesis and larval development (PubMed:17296929). Typically, expression level is higher in the posterior, and lower in the anterior, of a pair of sister cells (PubMed:17296929, PubMed:17567664). Asymmetrically distributed in daughters of many asymmetric divisions, for example the E blastomere has higher sys-1 than the MS blastomere, and posterior daughters in the embryonic hypodermis and larval T cell have higher levels of expression than anterior daughters (PubMed:17296929, PubMed:17567664). Asymmetry of expression may be regulated post-translationally, perhaps at the level of protein stability, and may involve proteasomal degradation (PubMed:17296929, PubMed:17567664). Transiently expressed asymmetrically in the embryo in the SMDD/AIY neuron lineage; asymmetry of expression is lost at the 1.5-fold stage (PubMed:19386265, PubMed:26073017). Not detectable in the somatic gonadal precursor cells (SGPs) Z1 and Z4, of newly hatched L1 larvae, but expressed in the SGPs about 1 hour before they undergo cell division (PubMed:17296929). During SGP division there is no asymmetry of expression between daughter cells, but immediately after division, expression is about 25-fold higher in distal daughters than in proximal daughters (PubMed:17296929).</text>
</comment>
<comment type="disruption phenotype">
    <text evidence="4 5 8 10">RNAi-mediated knockdown reduces the difference in the relative level of expression of helix-loop-helix protein hlh-2 in the SMDD/AIY neuroblast by comparison with the SIAD/SIBV neuroblast (PubMed:26073017). Low level of ectopic expression of tbx-35 in the E lineage (PubMed:35660370). Ectopic expression of irx-1 in several posterior sublineages of ABp (PubMed:35660370). Loss of ref-2 repression in several posterior sisters of the normally expressing embryonic sublineages (PubMed:35660370). Guts are missing in about 3-10% of embryos, but this increases to 100% in transcription factor skn-1 or Nemo-like kinase lit-1 mutant backgrounds (PubMed:17296929, PubMed:17567664).</text>
</comment>
<comment type="miscellaneous">
    <text evidence="4 5 6 8">Exhibits low sequence similarity to canonical beta-catenins but displays functional and structural similarities so that it appears to be a highly divergent beta-catenin.</text>
</comment>
<dbReference type="EMBL" id="BX284601">
    <property type="protein sequence ID" value="CAB03402.1"/>
    <property type="molecule type" value="Genomic_DNA"/>
</dbReference>
<dbReference type="EMBL" id="BX284601">
    <property type="protein sequence ID" value="CAC42344.1"/>
    <property type="molecule type" value="Genomic_DNA"/>
</dbReference>
<dbReference type="EMBL" id="BX284601">
    <property type="protein sequence ID" value="CTQ86377.1"/>
    <property type="molecule type" value="Genomic_DNA"/>
</dbReference>
<dbReference type="PIR" id="T25166">
    <property type="entry name" value="T25166"/>
</dbReference>
<dbReference type="RefSeq" id="NP_001300438.1">
    <molecule id="Q9XVI2-3"/>
    <property type="nucleotide sequence ID" value="NM_001313509.3"/>
</dbReference>
<dbReference type="RefSeq" id="NP_001379282.1">
    <molecule id="Q9XVI2-2"/>
    <property type="nucleotide sequence ID" value="NM_001392922.1"/>
</dbReference>
<dbReference type="RefSeq" id="NP_492639.1">
    <molecule id="Q9XVI2-1"/>
    <property type="nucleotide sequence ID" value="NM_060238.6"/>
</dbReference>
<dbReference type="RefSeq" id="NP_492640.1">
    <property type="nucleotide sequence ID" value="NM_060239.4"/>
</dbReference>
<dbReference type="PDB" id="3C2G">
    <property type="method" value="X-ray"/>
    <property type="resolution" value="2.50 A"/>
    <property type="chains" value="A/B=180-798"/>
</dbReference>
<dbReference type="PDB" id="3C2H">
    <property type="method" value="X-ray"/>
    <property type="resolution" value="2.60 A"/>
    <property type="chains" value="A/B=180-798"/>
</dbReference>
<dbReference type="PDBsum" id="3C2G"/>
<dbReference type="PDBsum" id="3C2H"/>
<dbReference type="SMR" id="Q9XVI2"/>
<dbReference type="FunCoup" id="Q9XVI2">
    <property type="interactions" value="1500"/>
</dbReference>
<dbReference type="IntAct" id="Q9XVI2">
    <property type="interactions" value="14"/>
</dbReference>
<dbReference type="STRING" id="6239.T23D8.9a.1"/>
<dbReference type="PaxDb" id="6239-T23D8.9a"/>
<dbReference type="PeptideAtlas" id="Q9XVI2"/>
<dbReference type="EnsemblMetazoa" id="T23D8.9a.1">
    <molecule id="Q9XVI2-1"/>
    <property type="protein sequence ID" value="T23D8.9a.1"/>
    <property type="gene ID" value="WBGene00006379"/>
</dbReference>
<dbReference type="EnsemblMetazoa" id="T23D8.9b.1">
    <molecule id="Q9XVI2-2"/>
    <property type="protein sequence ID" value="T23D8.9b.1"/>
    <property type="gene ID" value="WBGene00006379"/>
</dbReference>
<dbReference type="EnsemblMetazoa" id="T23D8.9c.1">
    <molecule id="Q9XVI2-3"/>
    <property type="protein sequence ID" value="T23D8.9c.1"/>
    <property type="gene ID" value="WBGene00006379"/>
</dbReference>
<dbReference type="GeneID" id="172859"/>
<dbReference type="KEGG" id="cel:CELE_T23D8.9"/>
<dbReference type="UCSC" id="T23D8.9a">
    <property type="organism name" value="c. elegans"/>
</dbReference>
<dbReference type="AGR" id="WB:WBGene00006379"/>
<dbReference type="CTD" id="172859"/>
<dbReference type="WormBase" id="T23D8.9a">
    <molecule id="Q9XVI2-1"/>
    <property type="protein sequence ID" value="CE18959"/>
    <property type="gene ID" value="WBGene00006379"/>
    <property type="gene designation" value="sys-1"/>
</dbReference>
<dbReference type="WormBase" id="T23D8.9b">
    <molecule id="Q9XVI2-2"/>
    <property type="protein sequence ID" value="CE27209"/>
    <property type="gene ID" value="WBGene00006379"/>
    <property type="gene designation" value="sys-1"/>
</dbReference>
<dbReference type="WormBase" id="T23D8.9c">
    <molecule id="Q9XVI2-3"/>
    <property type="protein sequence ID" value="CE50477"/>
    <property type="gene ID" value="WBGene00006379"/>
    <property type="gene designation" value="sys-1"/>
</dbReference>
<dbReference type="eggNOG" id="ENOG502TFKF">
    <property type="taxonomic scope" value="Eukaryota"/>
</dbReference>
<dbReference type="HOGENOM" id="CLU_346216_0_0_1"/>
<dbReference type="InParanoid" id="Q9XVI2"/>
<dbReference type="OMA" id="SCCAGWG"/>
<dbReference type="OrthoDB" id="5801431at2759"/>
<dbReference type="EvolutionaryTrace" id="Q9XVI2"/>
<dbReference type="Proteomes" id="UP000001940">
    <property type="component" value="Chromosome I"/>
</dbReference>
<dbReference type="Bgee" id="WBGene00006379">
    <property type="expression patterns" value="Expressed in embryo and 4 other cell types or tissues"/>
</dbReference>
<dbReference type="ExpressionAtlas" id="Q9XVI2">
    <property type="expression patterns" value="baseline and differential"/>
</dbReference>
<dbReference type="GO" id="GO:0005938">
    <property type="term" value="C:cell cortex"/>
    <property type="evidence" value="ECO:0000314"/>
    <property type="project" value="UniProtKB"/>
</dbReference>
<dbReference type="GO" id="GO:0005813">
    <property type="term" value="C:centrosome"/>
    <property type="evidence" value="ECO:0000314"/>
    <property type="project" value="UniProtKB"/>
</dbReference>
<dbReference type="GO" id="GO:0005737">
    <property type="term" value="C:cytoplasm"/>
    <property type="evidence" value="ECO:0000314"/>
    <property type="project" value="UniProtKB"/>
</dbReference>
<dbReference type="GO" id="GO:0000776">
    <property type="term" value="C:kinetochore"/>
    <property type="evidence" value="ECO:0000314"/>
    <property type="project" value="UniProtKB"/>
</dbReference>
<dbReference type="GO" id="GO:0005634">
    <property type="term" value="C:nucleus"/>
    <property type="evidence" value="ECO:0000314"/>
    <property type="project" value="UniProtKB"/>
</dbReference>
<dbReference type="GO" id="GO:0061629">
    <property type="term" value="F:RNA polymerase II-specific DNA-binding transcription factor binding"/>
    <property type="evidence" value="ECO:0000353"/>
    <property type="project" value="WormBase"/>
</dbReference>
<dbReference type="GO" id="GO:0097110">
    <property type="term" value="F:scaffold protein binding"/>
    <property type="evidence" value="ECO:0000353"/>
    <property type="project" value="UniProtKB"/>
</dbReference>
<dbReference type="GO" id="GO:0003713">
    <property type="term" value="F:transcription coactivator activity"/>
    <property type="evidence" value="ECO:0000314"/>
    <property type="project" value="WormBase"/>
</dbReference>
<dbReference type="GO" id="GO:0009792">
    <property type="term" value="P:embryo development ending in birth or egg hatching"/>
    <property type="evidence" value="ECO:0000315"/>
    <property type="project" value="WormBase"/>
</dbReference>
<dbReference type="GO" id="GO:0048566">
    <property type="term" value="P:embryonic digestive tract development"/>
    <property type="evidence" value="ECO:0000316"/>
    <property type="project" value="UniProtKB"/>
</dbReference>
<dbReference type="GO" id="GO:0001711">
    <property type="term" value="P:endodermal cell fate commitment"/>
    <property type="evidence" value="ECO:0000315"/>
    <property type="project" value="UniProtKB"/>
</dbReference>
<dbReference type="GO" id="GO:0008585">
    <property type="term" value="P:female gonad development"/>
    <property type="evidence" value="ECO:0000315"/>
    <property type="project" value="WormBase"/>
</dbReference>
<dbReference type="GO" id="GO:0008406">
    <property type="term" value="P:gonad development"/>
    <property type="evidence" value="ECO:0000316"/>
    <property type="project" value="UniProtKB"/>
</dbReference>
<dbReference type="GO" id="GO:0035262">
    <property type="term" value="P:gonad morphogenesis"/>
    <property type="evidence" value="ECO:0000315"/>
    <property type="project" value="UniProtKB"/>
</dbReference>
<dbReference type="GO" id="GO:0008584">
    <property type="term" value="P:male gonad development"/>
    <property type="evidence" value="ECO:0000315"/>
    <property type="project" value="WormBase"/>
</dbReference>
<dbReference type="GO" id="GO:0007501">
    <property type="term" value="P:mesodermal cell fate specification"/>
    <property type="evidence" value="ECO:0000315"/>
    <property type="project" value="UniProtKB"/>
</dbReference>
<dbReference type="GO" id="GO:0045892">
    <property type="term" value="P:negative regulation of DNA-templated transcription"/>
    <property type="evidence" value="ECO:0000315"/>
    <property type="project" value="UniProtKB"/>
</dbReference>
<dbReference type="GO" id="GO:0010629">
    <property type="term" value="P:negative regulation of gene expression"/>
    <property type="evidence" value="ECO:0000315"/>
    <property type="project" value="UniProtKB"/>
</dbReference>
<dbReference type="GO" id="GO:0010085">
    <property type="term" value="P:polarity specification of proximal/distal axis"/>
    <property type="evidence" value="ECO:0000315"/>
    <property type="project" value="UniProtKB"/>
</dbReference>
<dbReference type="GO" id="GO:0010628">
    <property type="term" value="P:positive regulation of gene expression"/>
    <property type="evidence" value="ECO:0000315"/>
    <property type="project" value="UniProtKB"/>
</dbReference>
<dbReference type="GO" id="GO:0048337">
    <property type="term" value="P:positive regulation of mesodermal cell fate specification"/>
    <property type="evidence" value="ECO:0000316"/>
    <property type="project" value="UniProtKB"/>
</dbReference>
<dbReference type="GO" id="GO:0045944">
    <property type="term" value="P:positive regulation of transcription by RNA polymerase II"/>
    <property type="evidence" value="ECO:0000314"/>
    <property type="project" value="WormBase"/>
</dbReference>
<dbReference type="GO" id="GO:0009954">
    <property type="term" value="P:proximal/distal pattern formation"/>
    <property type="evidence" value="ECO:0000315"/>
    <property type="project" value="WormBase"/>
</dbReference>
<dbReference type="GO" id="GO:0009786">
    <property type="term" value="P:regulation of asymmetric cell division"/>
    <property type="evidence" value="ECO:0000315"/>
    <property type="project" value="WormBase"/>
</dbReference>
<dbReference type="GO" id="GO:0016055">
    <property type="term" value="P:Wnt signaling pathway"/>
    <property type="evidence" value="ECO:0000315"/>
    <property type="project" value="UniProtKB"/>
</dbReference>
<dbReference type="Gene3D" id="1.25.10.10">
    <property type="entry name" value="Leucine-rich Repeat Variant"/>
    <property type="match status" value="1"/>
</dbReference>
<dbReference type="Gene3D" id="1.10.10.1630">
    <property type="entry name" value="Sys-1 C-terminal domain-like"/>
    <property type="match status" value="1"/>
</dbReference>
<dbReference type="InterPro" id="IPR011989">
    <property type="entry name" value="ARM-like"/>
</dbReference>
<dbReference type="InterPro" id="IPR016024">
    <property type="entry name" value="ARM-type_fold"/>
</dbReference>
<dbReference type="SUPFAM" id="SSF48371">
    <property type="entry name" value="ARM repeat"/>
    <property type="match status" value="2"/>
</dbReference>
<accession>Q9XVI2</accession>
<accession>A0A0K3ARA0</accession>
<accession>Q95ZN3</accession>
<keyword id="KW-0002">3D-structure</keyword>
<keyword id="KW-0025">Alternative splicing</keyword>
<keyword id="KW-0137">Centromere</keyword>
<keyword id="KW-0158">Chromosome</keyword>
<keyword id="KW-0963">Cytoplasm</keyword>
<keyword id="KW-0206">Cytoskeleton</keyword>
<keyword id="KW-0995">Kinetochore</keyword>
<keyword id="KW-0539">Nucleus</keyword>
<keyword id="KW-1185">Reference proteome</keyword>
<keyword id="KW-0804">Transcription</keyword>
<keyword id="KW-0805">Transcription regulation</keyword>
<keyword id="KW-0879">Wnt signaling pathway</keyword>
<evidence type="ECO:0000256" key="1">
    <source>
        <dbReference type="SAM" id="MobiDB-lite"/>
    </source>
</evidence>
<evidence type="ECO:0000269" key="2">
    <source>
    </source>
</evidence>
<evidence type="ECO:0000269" key="3">
    <source>
    </source>
</evidence>
<evidence type="ECO:0000269" key="4">
    <source>
    </source>
</evidence>
<evidence type="ECO:0000269" key="5">
    <source>
    </source>
</evidence>
<evidence type="ECO:0000269" key="6">
    <source>
    </source>
</evidence>
<evidence type="ECO:0000269" key="7">
    <source>
    </source>
</evidence>
<evidence type="ECO:0000269" key="8">
    <source>
    </source>
</evidence>
<evidence type="ECO:0000269" key="9">
    <source>
    </source>
</evidence>
<evidence type="ECO:0000269" key="10">
    <source>
    </source>
</evidence>
<evidence type="ECO:0000303" key="11">
    <source>
    </source>
</evidence>
<evidence type="ECO:0000305" key="12"/>
<evidence type="ECO:0000312" key="13">
    <source>
        <dbReference type="Proteomes" id="UP000001940"/>
    </source>
</evidence>
<evidence type="ECO:0000312" key="14">
    <source>
        <dbReference type="WormBase" id="T23D8.9a"/>
    </source>
</evidence>
<evidence type="ECO:0000312" key="15">
    <source>
        <dbReference type="WormBase" id="T23D8.9b"/>
    </source>
</evidence>
<evidence type="ECO:0000312" key="16">
    <source>
        <dbReference type="WormBase" id="T23D8.9c"/>
    </source>
</evidence>
<evidence type="ECO:0007744" key="17">
    <source>
        <dbReference type="PDB" id="3C2G"/>
    </source>
</evidence>
<evidence type="ECO:0007744" key="18">
    <source>
        <dbReference type="PDB" id="3C2H"/>
    </source>
</evidence>
<evidence type="ECO:0007829" key="19">
    <source>
        <dbReference type="PDB" id="3C2G"/>
    </source>
</evidence>
<evidence type="ECO:0007829" key="20">
    <source>
        <dbReference type="PDB" id="3C2H"/>
    </source>
</evidence>
<sequence length="811" mass="92566">MHSTGEPQRGPAGPYHHPMPYHVDQIPTTSHPSWHQAPHPGLPTPPYHPQQHPNYISMQPPPSQQQQMTPQALSTQQQQQVQQQQQRQLYSSPSPSRGPAAPAQNQKFRTEQWINNQAWPYSQSPAPPVAPSVMSYHQGDDRMSMLSVNTTMTNQFPDSQRCYSSNGSTCENVNPEMMQMNITQAAEQAIRLWFNTPDPMQRLHMAKTIRTWIRQDKFAQVDQANMPNCVQQILNIIYDGLKPQPVQLPISYYAQLWYNLLDILRRFTFLPIISPYIHQVVQMFCPRENGPQDFRELICNLISLNWQKDPHMKHCANQVFQIFNCIIMGVKNEKLRTEFAQHLKFEKLVGTLSEYFNPQVHPGMINPAIFIIFRFIISKDTRLKDYFIWNNNPHDQPPPPTGLIIKLNAVMIGSYRLIAGQNPETLPQNPELAHLIQVIIRTFDLLGLLLHDSDAIDGFVRSDGVGAITTVVQYPNNDLIRAGCKLLLQVSDAKALAKTPLENILPFLLRLIEIHPDDEVIYSGTGFLSNVVAHKQHVKDIAIRSNAIFLLHTIISKYPRLDELTDAPKRNRVCEIICNCLRTLNNFLMMWIPTPNGETKTAGPNEKQQVCKFIEIDILKKLMSCLSCEGMDTPGLLELRSTILRSFILLLRTPFVPKDGVLNVIDENRKENLIGHICAAYSWVFRQPNNTRTQSTKQQLVERTISLLLVLMEQCGAEKEVAQYSYSIDCPLNLLNGNQVKPTFIHNVLVVCDKILEHCPTRADIWTIDRPMLEGLTNHRNSDIAKAANSLLSRFPENDLLAGIFSNREYF</sequence>